<organism>
    <name type="scientific">Avian infectious bronchitis virus (strain M41)</name>
    <name type="common">IBV</name>
    <dbReference type="NCBI Taxonomy" id="11127"/>
    <lineage>
        <taxon>Viruses</taxon>
        <taxon>Riboviria</taxon>
        <taxon>Orthornavirae</taxon>
        <taxon>Pisuviricota</taxon>
        <taxon>Pisoniviricetes</taxon>
        <taxon>Nidovirales</taxon>
        <taxon>Cornidovirineae</taxon>
        <taxon>Coronaviridae</taxon>
        <taxon>Orthocoronavirinae</taxon>
        <taxon>Gammacoronavirus</taxon>
        <taxon>Igacovirus</taxon>
        <taxon>Avian coronavirus</taxon>
    </lineage>
</organism>
<comment type="function">
    <text evidence="1 2">Component of the viral envelope that plays a central role in virus morphogenesis and assembly via its interactions with other viral proteins.</text>
</comment>
<comment type="subunit">
    <text evidence="1 2">Homomultimer. Interacts with envelope E protein in the budding compartment of the host cell, which is located between endoplasmic reticulum and the Golgi complex. Forms a complex with HE and S proteins. Interacts with nucleocapsid N protein. This interaction probably participates in RNA packaging into the virus.</text>
</comment>
<comment type="subcellular location">
    <subcellularLocation>
        <location evidence="1">Virion membrane</location>
        <topology evidence="1">Multi-pass membrane protein</topology>
    </subcellularLocation>
    <subcellularLocation>
        <location evidence="1">Host Golgi apparatus membrane</location>
        <topology evidence="1">Multi-pass membrane protein</topology>
    </subcellularLocation>
    <text evidence="1">Largely embedded in the lipid bilayer.</text>
</comment>
<comment type="similarity">
    <text evidence="1">Belongs to the gammacoronaviruses M protein family.</text>
</comment>
<organismHost>
    <name type="scientific">Gallus gallus</name>
    <name type="common">Chicken</name>
    <dbReference type="NCBI Taxonomy" id="9031"/>
</organismHost>
<name>VME1_IBVM</name>
<protein>
    <recommendedName>
        <fullName evidence="1">Membrane protein</fullName>
        <shortName evidence="1">M protein</shortName>
    </recommendedName>
    <alternativeName>
        <fullName evidence="1">E1 glycoprotein</fullName>
    </alternativeName>
    <alternativeName>
        <fullName evidence="1">Matrix glycoprotein</fullName>
    </alternativeName>
    <alternativeName>
        <fullName evidence="1">Membrane glycoprotein</fullName>
    </alternativeName>
</protein>
<keyword id="KW-0325">Glycoprotein</keyword>
<keyword id="KW-1040">Host Golgi apparatus</keyword>
<keyword id="KW-1043">Host membrane</keyword>
<keyword id="KW-0472">Membrane</keyword>
<keyword id="KW-0812">Transmembrane</keyword>
<keyword id="KW-1133">Transmembrane helix</keyword>
<keyword id="KW-0261">Viral envelope protein</keyword>
<keyword id="KW-0468">Viral matrix protein</keyword>
<keyword id="KW-0946">Virion</keyword>
<evidence type="ECO:0000255" key="1">
    <source>
        <dbReference type="HAMAP-Rule" id="MF_04203"/>
    </source>
</evidence>
<evidence type="ECO:0000255" key="2">
    <source>
        <dbReference type="PROSITE-ProRule" id="PRU01275"/>
    </source>
</evidence>
<gene>
    <name evidence="1" type="primary">M</name>
</gene>
<sequence length="225" mass="25539">MSNETNCTLDFEQSVELFKEYNLFITAFLLFLTIILQYGYATRSKFIYILKMIVLWCFWPLNIAVGVISCIYPPNTGGLVAAIILTVFACLSFVGYWIQSIRLFKRCRSWWSFNPESNAVGSILLTNGQQCNFAIESVPMVLSPIIKNGVLYCEGQWLAKCEPDHLPKDIFVCTPDRRNIYRMVQKYTGDQSGNKKRFATFVYAKQSVDTGELESVATGGSSLYT</sequence>
<accession>P69606</accession>
<accession>Q5I5X5</accession>
<accession>Q91GB7</accession>
<accession>Q99AS5</accession>
<dbReference type="EMBL" id="AF363609">
    <property type="protein sequence ID" value="AAK50036.1"/>
    <property type="molecule type" value="Genomic_RNA"/>
</dbReference>
<dbReference type="EMBL" id="AF343343">
    <property type="protein sequence ID" value="AAK14400.1"/>
    <property type="molecule type" value="Genomic_RNA"/>
</dbReference>
<dbReference type="EMBL" id="AF286184">
    <property type="protein sequence ID" value="AAK83030.1"/>
    <property type="molecule type" value="mRNA"/>
</dbReference>
<dbReference type="EMBL" id="DQ834384">
    <property type="protein sequence ID" value="ABI26427.1"/>
    <property type="molecule type" value="Genomic_RNA"/>
</dbReference>
<dbReference type="EMBL" id="AY851295">
    <property type="protein sequence ID" value="AAW33790.1"/>
    <property type="molecule type" value="Genomic_RNA"/>
</dbReference>
<dbReference type="SMR" id="P69606"/>
<dbReference type="Proteomes" id="UP000007642">
    <property type="component" value="Genome"/>
</dbReference>
<dbReference type="Proteomes" id="UP000096468">
    <property type="component" value="Genome"/>
</dbReference>
<dbReference type="GO" id="GO:0044178">
    <property type="term" value="C:host cell Golgi membrane"/>
    <property type="evidence" value="ECO:0007669"/>
    <property type="project" value="UniProtKB-SubCell"/>
</dbReference>
<dbReference type="GO" id="GO:0016020">
    <property type="term" value="C:membrane"/>
    <property type="evidence" value="ECO:0007669"/>
    <property type="project" value="UniProtKB-UniRule"/>
</dbReference>
<dbReference type="GO" id="GO:0019031">
    <property type="term" value="C:viral envelope"/>
    <property type="evidence" value="ECO:0007669"/>
    <property type="project" value="UniProtKB-UniRule"/>
</dbReference>
<dbReference type="GO" id="GO:0055036">
    <property type="term" value="C:virion membrane"/>
    <property type="evidence" value="ECO:0007669"/>
    <property type="project" value="UniProtKB-SubCell"/>
</dbReference>
<dbReference type="GO" id="GO:0039660">
    <property type="term" value="F:structural constituent of virion"/>
    <property type="evidence" value="ECO:0007669"/>
    <property type="project" value="UniProtKB-UniRule"/>
</dbReference>
<dbReference type="CDD" id="cd21566">
    <property type="entry name" value="gammaCoV_M"/>
    <property type="match status" value="1"/>
</dbReference>
<dbReference type="HAMAP" id="MF_04203">
    <property type="entry name" value="GAMMA_CORONA_M"/>
    <property type="match status" value="1"/>
</dbReference>
<dbReference type="InterPro" id="IPR042550">
    <property type="entry name" value="GAMMA_CORONA_M"/>
</dbReference>
<dbReference type="InterPro" id="IPR002574">
    <property type="entry name" value="M_CoV"/>
</dbReference>
<dbReference type="Pfam" id="PF01635">
    <property type="entry name" value="CoV_M"/>
    <property type="match status" value="1"/>
</dbReference>
<dbReference type="PROSITE" id="PS51927">
    <property type="entry name" value="COV_M"/>
    <property type="match status" value="1"/>
</dbReference>
<reference key="1">
    <citation type="journal article" date="2000" name="Arch. Virol.">
        <title>Evidence of genetic diversity generated by recombination among avian coronavirus IBV.</title>
        <authorList>
            <person name="Lee C.-W."/>
            <person name="Jackwood M.W."/>
        </authorList>
    </citation>
    <scope>NUCLEOTIDE SEQUENCE [GENOMIC RNA]</scope>
</reference>
<reference key="2">
    <citation type="submission" date="2001-01" db="EMBL/GenBank/DDBJ databases">
        <title>Sequence analysis of matrix gene of several strains of avian infectious bronchitis virus.</title>
        <authorList>
            <person name="Cao W.S."/>
            <person name="Liao M."/>
            <person name="Ren T."/>
            <person name="Xin C.A."/>
        </authorList>
    </citation>
    <scope>NUCLEOTIDE SEQUENCE [GENOMIC RNA]</scope>
</reference>
<reference key="3">
    <citation type="submission" date="2000-07" db="EMBL/GenBank/DDBJ databases">
        <title>Comparisons of the membrane protein genes of various strains of avian infectious bronchitis virus.</title>
        <authorList>
            <person name="Brooks J.E."/>
            <person name="Rainer A.C."/>
            <person name="Parr R.L."/>
            <person name="Collisson E.W."/>
        </authorList>
    </citation>
    <scope>NUCLEOTIDE SEQUENCE [MRNA]</scope>
</reference>
<reference key="4">
    <citation type="submission" date="2006-06" db="EMBL/GenBank/DDBJ databases">
        <title>Avian infectious bronchitis virus strain M41.</title>
        <authorList>
            <person name="Mondal S.P."/>
            <person name="Buckles E.L."/>
        </authorList>
    </citation>
    <scope>NUCLEOTIDE SEQUENCE [GENOMIC RNA]</scope>
</reference>
<reference key="5">
    <citation type="journal article" date="2006" name="J. Virol. Methods">
        <title>Development and evaluation of a real-time Taqman RT-PCR assay for the detection of infectious bronchitis virus from infected chickens.</title>
        <authorList>
            <person name="Callison S.A."/>
            <person name="Hilt D.A."/>
            <person name="Boynton T.O."/>
            <person name="Sample B.F."/>
            <person name="Robison R."/>
            <person name="Swayne D.E."/>
            <person name="Jackwood M.W."/>
        </authorList>
    </citation>
    <scope>NUCLEOTIDE SEQUENCE [GENOMIC RNA]</scope>
</reference>
<proteinExistence type="evidence at transcript level"/>
<feature type="chain" id="PRO_0000106057" description="Membrane protein">
    <location>
        <begin position="1"/>
        <end position="225"/>
    </location>
</feature>
<feature type="topological domain" description="Virion surface" evidence="1">
    <location>
        <begin position="1"/>
        <end position="20"/>
    </location>
</feature>
<feature type="transmembrane region" description="Helical" evidence="1">
    <location>
        <begin position="21"/>
        <end position="41"/>
    </location>
</feature>
<feature type="topological domain" description="Intravirion" evidence="1">
    <location>
        <begin position="42"/>
        <end position="51"/>
    </location>
</feature>
<feature type="transmembrane region" description="Helical" evidence="1">
    <location>
        <begin position="52"/>
        <end position="72"/>
    </location>
</feature>
<feature type="topological domain" description="Virion surface" evidence="1">
    <location>
        <begin position="73"/>
        <end position="77"/>
    </location>
</feature>
<feature type="transmembrane region" description="Helical" evidence="1">
    <location>
        <begin position="78"/>
        <end position="98"/>
    </location>
</feature>
<feature type="topological domain" description="Intravirion" evidence="1">
    <location>
        <begin position="99"/>
        <end position="225"/>
    </location>
</feature>